<sequence>MNKLYIGNLSENVSPPDLESLFKESKIPFTGQFLVKSGYAFVDCPDETWAMKAIDTLSGKVELHGKVIEVEHSVPKRQRSRKLQIRNIPPHLQWEVLDSLLAQYGTVENCEQVNTDSETAVVNVTYANKEHARQGLEKLNGYQLENYSLKVTYIPDEMATPQSPSQQLQQPQQQHPQGRRGFGQRGPARQGSPGAAARPKPQSEVPLRMLVPTQFVGAIIGKEGATIRNITKQTQSKIDIHRKENAGAAEKPITIHSTPEGCSAACKIIMEIMQKEAQDTKFTEEIPLKILAHNNFVGRLIGKEGRNLKKIEQDTDTKITISPLQDLTLYNPERTITVKGSIETCAKAEEEVMKKIRESYENDIAAMNLQAHLIPGLNLNALGLFPPSSSGMPPPSAGVSSPTTSASYPPFGQQPESETVHLFIPALAVGAIIGKQGQHIKQLSRFAGASIKIAPAEGPDAKLRMVIITGPPEAQFKAQGRIYGKLKEENFFGPKEEVKLEAHIKVPSYAAGRVIGKGGKTVNELQNLTSAEVVVPRDQTPDENDQVVVKITGHFYASQLAQRKIQEILAQVRRQQQQQQKTAQSGQPQPRRK</sequence>
<reference key="1">
    <citation type="journal article" date="1992" name="Dev. Biol.">
        <title>Characterization of a Xenopus oocyte factor that binds to a developmentally regulated cis-element in the TFIIIA gene.</title>
        <authorList>
            <person name="Pfaff S.L."/>
            <person name="Taylor W.L."/>
        </authorList>
    </citation>
    <scope>NUCLEOTIDE SEQUENCE [MRNA]</scope>
    <scope>DNA-BINDING</scope>
    <source>
        <tissue>Oocyte</tissue>
    </source>
</reference>
<reference key="2">
    <citation type="journal article" date="1998" name="Genes Dev.">
        <title>RNA-binding protein conserved in both microtubule- and microfilament-based RNA localization.</title>
        <authorList>
            <person name="Havin L."/>
            <person name="Git A."/>
            <person name="Elisha Z."/>
            <person name="Oberman F."/>
            <person name="Yaniv K."/>
            <person name="Schwartz S.P."/>
            <person name="Standart N."/>
            <person name="Yisraeli J.K."/>
        </authorList>
    </citation>
    <scope>NUCLEOTIDE SEQUENCE [MRNA]</scope>
    <scope>PROTEIN SEQUENCE OF 281-289; 441-452; 485-499 AND 505-517</scope>
    <scope>RNA-BINDING</scope>
    <source>
        <tissue>Oocyte</tissue>
    </source>
</reference>
<reference key="3">
    <citation type="journal article" date="2003" name="Gene">
        <title>Isolation of the B3 transcription factor of the Xenopus TFIIIA gene.</title>
        <authorList>
            <person name="Griffin D."/>
            <person name="Penberthy W.T."/>
            <person name="Lum H."/>
            <person name="Stein R.W."/>
            <person name="Taylor W.L."/>
        </authorList>
    </citation>
    <scope>NUCLEOTIDE SEQUENCE [MRNA]</scope>
    <scope>PROTEIN SEQUENCE OF 151-180; 209-222; 290-299 AND 319-334</scope>
    <scope>IDENTIFICATION IN A B3 ACTIVATOR COMPLEX</scope>
    <scope>TISSUE SPECIFICITY</scope>
    <scope>DNA-BINDING</scope>
    <source>
        <tissue>Oocyte</tissue>
    </source>
</reference>
<reference key="4">
    <citation type="submission" date="2003-09" db="EMBL/GenBank/DDBJ databases">
        <authorList>
            <consortium name="NIH - Xenopus Gene Collection (XGC) project"/>
        </authorList>
    </citation>
    <scope>NUCLEOTIDE SEQUENCE [LARGE SCALE MRNA]</scope>
    <source>
        <tissue>Embryo</tissue>
    </source>
</reference>
<reference key="5">
    <citation type="journal article" date="1998" name="Curr. Biol.">
        <title>A highly conserved RNA-binding protein for cytoplasmic mRNA localization in vertebrates.</title>
        <authorList>
            <person name="Deshler J.O."/>
            <person name="Highett M.I."/>
            <person name="Abramson T."/>
            <person name="Schnapp B.J."/>
        </authorList>
    </citation>
    <scope>PROTEIN SEQUENCE OF 151-164; 209-222; 282-288 AND 486-495</scope>
    <source>
        <tissue>Oocyte</tissue>
    </source>
</reference>
<reference key="6">
    <citation type="journal article" date="2005" name="Biol. Cell">
        <title>VICKZ proteins: a multi-talented family of regulatory RNA-binding proteins.</title>
        <authorList>
            <person name="Yisraeli J.K."/>
        </authorList>
    </citation>
    <scope>REVIEW</scope>
</reference>
<evidence type="ECO:0000250" key="1"/>
<evidence type="ECO:0000250" key="2">
    <source>
        <dbReference type="UniProtKB" id="O00425"/>
    </source>
</evidence>
<evidence type="ECO:0000250" key="3">
    <source>
        <dbReference type="UniProtKB" id="O73932"/>
    </source>
</evidence>
<evidence type="ECO:0000255" key="4">
    <source>
        <dbReference type="PROSITE-ProRule" id="PRU00117"/>
    </source>
</evidence>
<evidence type="ECO:0000255" key="5">
    <source>
        <dbReference type="PROSITE-ProRule" id="PRU00176"/>
    </source>
</evidence>
<evidence type="ECO:0000256" key="6">
    <source>
        <dbReference type="SAM" id="MobiDB-lite"/>
    </source>
</evidence>
<evidence type="ECO:0000269" key="7">
    <source>
    </source>
</evidence>
<evidence type="ECO:0000269" key="8">
    <source>
    </source>
</evidence>
<evidence type="ECO:0000305" key="9"/>
<protein>
    <recommendedName>
        <fullName>Insulin-like growth factor 2 mRNA-binding protein 3-B</fullName>
        <shortName>IGF2 mRNA-binding protein 3-B</shortName>
        <shortName>IMP-3-B</shortName>
    </recommendedName>
    <alternativeName>
        <fullName>69 kDa RNA-binding protein B</fullName>
    </alternativeName>
    <alternativeName>
        <fullName>B3.65 protein B</fullName>
    </alternativeName>
    <alternativeName>
        <fullName>IGF-II mRNA-binding protein 3-B</fullName>
    </alternativeName>
    <alternativeName>
        <fullName>KH domain-containing transcription factor B3-B</fullName>
    </alternativeName>
    <alternativeName>
        <fullName>RNA-binding protein Vera-B</fullName>
    </alternativeName>
    <alternativeName>
        <fullName>Trans-acting factor B3-B</fullName>
    </alternativeName>
    <alternativeName>
        <fullName>VICKZ family member 3-B</fullName>
    </alternativeName>
    <alternativeName>
        <fullName>VLE-binding protein B</fullName>
    </alternativeName>
    <alternativeName>
        <fullName>Vg1 RNA-binding protein B</fullName>
        <shortName>Vg1 RBP-B</shortName>
    </alternativeName>
    <alternativeName>
        <fullName>Vg1 localization element binding protein B</fullName>
    </alternativeName>
    <alternativeName>
        <fullName>VgLE-binding and ER association protein B</fullName>
    </alternativeName>
</protein>
<comment type="function">
    <text evidence="2 3 7 8">RNA-binding protein that acts as a regulator of mRNA transport and localization. Binds to the RNA sequence motif 5'-UUCAC-3'. Preferentially binds to N6-methyladenosine (m6A)-containing mRNAs and increases their stability (By similarity). Mediates the specific association of Vg1 RNA to microtubules. May regulate mRNA translation (By similarity). Binds specifically to the vegetal localization elements (VLE or VgLE) in the 3'-UTR of Vg1 and VegT mRNAs. Binds to the Vg1 and VegT mRNAs in both the nucleus and the cytoplasm. May regulate mRNA translation (By similarity). Acts as a transcription regulator (PubMed:12957389, PubMed:1577195). Binds to the 5'-[TA]GGTTACT-3' motif within element 3 of the TFIIIA gene promoter (PubMed:12957389, PubMed:1577195).</text>
</comment>
<comment type="subunit">
    <text evidence="3 7">Homodimer and multimer (By similarity). Associates with microtubules (By similarity). Interaction with a translocation machinery protein TRAPA of the endoplasmic reticulum (By similarity). Component of a mRNP complex, at least composed of DAZAP1, IGF2BP3, STAU and VgRBP60 (By similarity). The mRNP complex with DAZAP1, IGF2BP3, STAU and VgRBP60 is only found in the cytoplasm (By similarity). Interacts with a hnRNP 1 related RNA transport protein VgRBP60 both in the nucleus (in an RNA-independent manner) and the cytoplasm (in an RNA-dependent manner) (By similarity). Found in a B3 activator complex.</text>
</comment>
<comment type="subcellular location">
    <subcellularLocation>
        <location>Nucleus</location>
    </subcellularLocation>
    <subcellularLocation>
        <location>Cytoplasm</location>
    </subcellularLocation>
    <subcellularLocation>
        <location>Endoplasmic reticulum</location>
    </subcellularLocation>
    <text evidence="1">Accumulates along the vegetal cortex in oocytes as oogenesis progresses ('late pathway' for RNA localization). Colocalizes with Vg1 RNA along the vegetal cortex (By similarity).</text>
</comment>
<comment type="tissue specificity">
    <text evidence="7">Expressed in oocytes, kidney and pancreas (at protein level). Expressed in oocytes, kidney and pancreas.</text>
</comment>
<comment type="domain">
    <text evidence="1">The third and fourth KH domains are involved in RNA binding and self-association. Stable self-association requires RNA (By similarity).</text>
</comment>
<comment type="similarity">
    <text evidence="9">Belongs to the RRM IMP/VICKZ family.</text>
</comment>
<name>IF23B_XENLA</name>
<feature type="chain" id="PRO_0000282543" description="Insulin-like growth factor 2 mRNA-binding protein 3-B">
    <location>
        <begin position="1"/>
        <end position="593"/>
    </location>
</feature>
<feature type="domain" description="RRM 1" evidence="5">
    <location>
        <begin position="2"/>
        <end position="75"/>
    </location>
</feature>
<feature type="domain" description="RRM 2" evidence="5">
    <location>
        <begin position="81"/>
        <end position="156"/>
    </location>
</feature>
<feature type="domain" description="KH 1" evidence="4">
    <location>
        <begin position="204"/>
        <end position="269"/>
    </location>
</feature>
<feature type="domain" description="KH 2" evidence="4">
    <location>
        <begin position="285"/>
        <end position="352"/>
    </location>
</feature>
<feature type="domain" description="KH 3" evidence="4">
    <location>
        <begin position="417"/>
        <end position="482"/>
    </location>
</feature>
<feature type="domain" description="KH 4" evidence="4">
    <location>
        <begin position="499"/>
        <end position="565"/>
    </location>
</feature>
<feature type="region of interest" description="Disordered" evidence="6">
    <location>
        <begin position="159"/>
        <end position="208"/>
    </location>
</feature>
<feature type="region of interest" description="Disordered" evidence="6">
    <location>
        <begin position="390"/>
        <end position="412"/>
    </location>
</feature>
<feature type="region of interest" description="Disordered" evidence="6">
    <location>
        <begin position="571"/>
        <end position="593"/>
    </location>
</feature>
<feature type="compositionally biased region" description="Low complexity" evidence="6">
    <location>
        <begin position="161"/>
        <end position="176"/>
    </location>
</feature>
<feature type="compositionally biased region" description="Low complexity" evidence="6">
    <location>
        <begin position="390"/>
        <end position="402"/>
    </location>
</feature>
<feature type="sequence conflict" description="In Ref. 5; AA sequence." evidence="9" ref="5">
    <original>T</original>
    <variation>A</variation>
    <location>
        <position position="160"/>
    </location>
</feature>
<feature type="sequence conflict" description="In Ref. 5; AA sequence." evidence="9" ref="5">
    <original>S</original>
    <variation>A</variation>
    <location>
        <position position="163"/>
    </location>
</feature>
<feature type="sequence conflict" description="In Ref. 5; AA sequence." evidence="9" ref="5">
    <original>L</original>
    <variation>M</variation>
    <location>
        <position position="210"/>
    </location>
</feature>
<feature type="sequence conflict" description="In Ref. 5; AA sequence." evidence="9" ref="5">
    <original>G</original>
    <variation>T</variation>
    <location>
        <position position="221"/>
    </location>
</feature>
<feature type="sequence conflict" description="In Ref. 5; AA sequence." evidence="9" ref="5">
    <original>L</original>
    <variation>V</variation>
    <location>
        <position position="288"/>
    </location>
</feature>
<feature type="sequence conflict" description="In Ref. 5; AA sequence." evidence="9" ref="5">
    <original>L</original>
    <variation>I</variation>
    <location>
        <position position="486"/>
    </location>
</feature>
<proteinExistence type="evidence at protein level"/>
<gene>
    <name type="primary">igf2bp3-b</name>
    <name type="synonym">vickz3-b</name>
</gene>
<organism>
    <name type="scientific">Xenopus laevis</name>
    <name type="common">African clawed frog</name>
    <dbReference type="NCBI Taxonomy" id="8355"/>
    <lineage>
        <taxon>Eukaryota</taxon>
        <taxon>Metazoa</taxon>
        <taxon>Chordata</taxon>
        <taxon>Craniata</taxon>
        <taxon>Vertebrata</taxon>
        <taxon>Euteleostomi</taxon>
        <taxon>Amphibia</taxon>
        <taxon>Batrachia</taxon>
        <taxon>Anura</taxon>
        <taxon>Pipoidea</taxon>
        <taxon>Pipidae</taxon>
        <taxon>Xenopodinae</taxon>
        <taxon>Xenopus</taxon>
        <taxon>Xenopus</taxon>
    </lineage>
</organism>
<keyword id="KW-0963">Cytoplasm</keyword>
<keyword id="KW-0217">Developmental protein</keyword>
<keyword id="KW-0903">Direct protein sequencing</keyword>
<keyword id="KW-0238">DNA-binding</keyword>
<keyword id="KW-0256">Endoplasmic reticulum</keyword>
<keyword id="KW-0509">mRNA transport</keyword>
<keyword id="KW-0539">Nucleus</keyword>
<keyword id="KW-1185">Reference proteome</keyword>
<keyword id="KW-0677">Repeat</keyword>
<keyword id="KW-0694">RNA-binding</keyword>
<keyword id="KW-0804">Transcription</keyword>
<keyword id="KW-0805">Transcription regulation</keyword>
<keyword id="KW-0810">Translation regulation</keyword>
<keyword id="KW-0813">Transport</keyword>
<dbReference type="EMBL" id="AF042353">
    <property type="protein sequence ID" value="AAB97457.1"/>
    <property type="molecule type" value="mRNA"/>
</dbReference>
<dbReference type="EMBL" id="AF064633">
    <property type="protein sequence ID" value="AAC18597.1"/>
    <property type="molecule type" value="mRNA"/>
</dbReference>
<dbReference type="EMBL" id="BC057700">
    <property type="protein sequence ID" value="AAH57700.1"/>
    <property type="molecule type" value="mRNA"/>
</dbReference>
<dbReference type="SMR" id="O57526"/>
<dbReference type="BioGRID" id="97866">
    <property type="interactions" value="2"/>
</dbReference>
<dbReference type="DNASU" id="379623"/>
<dbReference type="GeneID" id="379623"/>
<dbReference type="KEGG" id="xla:379623"/>
<dbReference type="AGR" id="Xenbase:XB-GENE-6255198"/>
<dbReference type="CTD" id="379623"/>
<dbReference type="Xenbase" id="XB-GENE-6255198">
    <property type="gene designation" value="igf2bp3.S"/>
</dbReference>
<dbReference type="OrthoDB" id="752362at2759"/>
<dbReference type="Proteomes" id="UP000186698">
    <property type="component" value="Chromosome 6S"/>
</dbReference>
<dbReference type="Bgee" id="379623">
    <property type="expression patterns" value="Expressed in embryo and 1 other cell type or tissue"/>
</dbReference>
<dbReference type="GO" id="GO:0005737">
    <property type="term" value="C:cytoplasm"/>
    <property type="evidence" value="ECO:0000318"/>
    <property type="project" value="GO_Central"/>
</dbReference>
<dbReference type="GO" id="GO:0005829">
    <property type="term" value="C:cytosol"/>
    <property type="evidence" value="ECO:0000318"/>
    <property type="project" value="GO_Central"/>
</dbReference>
<dbReference type="GO" id="GO:0005783">
    <property type="term" value="C:endoplasmic reticulum"/>
    <property type="evidence" value="ECO:0007669"/>
    <property type="project" value="UniProtKB-SubCell"/>
</dbReference>
<dbReference type="GO" id="GO:0005634">
    <property type="term" value="C:nucleus"/>
    <property type="evidence" value="ECO:0000318"/>
    <property type="project" value="GO_Central"/>
</dbReference>
<dbReference type="GO" id="GO:0003677">
    <property type="term" value="F:DNA binding"/>
    <property type="evidence" value="ECO:0007669"/>
    <property type="project" value="UniProtKB-KW"/>
</dbReference>
<dbReference type="GO" id="GO:0003730">
    <property type="term" value="F:mRNA 3'-UTR binding"/>
    <property type="evidence" value="ECO:0000250"/>
    <property type="project" value="UniProtKB"/>
</dbReference>
<dbReference type="GO" id="GO:0070934">
    <property type="term" value="P:CRD-mediated mRNA stabilization"/>
    <property type="evidence" value="ECO:0000318"/>
    <property type="project" value="GO_Central"/>
</dbReference>
<dbReference type="GO" id="GO:0051028">
    <property type="term" value="P:mRNA transport"/>
    <property type="evidence" value="ECO:0007669"/>
    <property type="project" value="UniProtKB-KW"/>
</dbReference>
<dbReference type="GO" id="GO:0007399">
    <property type="term" value="P:nervous system development"/>
    <property type="evidence" value="ECO:0000318"/>
    <property type="project" value="GO_Central"/>
</dbReference>
<dbReference type="GO" id="GO:0006417">
    <property type="term" value="P:regulation of translation"/>
    <property type="evidence" value="ECO:0007669"/>
    <property type="project" value="UniProtKB-KW"/>
</dbReference>
<dbReference type="CDD" id="cd22490">
    <property type="entry name" value="KH-I_IGF2BP1_rpt1"/>
    <property type="match status" value="1"/>
</dbReference>
<dbReference type="CDD" id="cd22498">
    <property type="entry name" value="KH-I_IGF2BP3_rpt3"/>
    <property type="match status" value="1"/>
</dbReference>
<dbReference type="CDD" id="cd12627">
    <property type="entry name" value="RRM1_IGF2BP3"/>
    <property type="match status" value="1"/>
</dbReference>
<dbReference type="CDD" id="cd12630">
    <property type="entry name" value="RRM2_IGF2BP3"/>
    <property type="match status" value="1"/>
</dbReference>
<dbReference type="FunFam" id="3.30.70.330:FF:000203">
    <property type="entry name" value="insulin-like growth factor 2 mRNA-binding protein 1"/>
    <property type="match status" value="1"/>
</dbReference>
<dbReference type="FunFam" id="3.30.310.210:FF:000001">
    <property type="entry name" value="insulin-like growth factor 2 mRNA-binding protein 1 isoform X1"/>
    <property type="match status" value="1"/>
</dbReference>
<dbReference type="FunFam" id="3.30.1370.10:FF:000026">
    <property type="entry name" value="Insulin-like growth factor 2 mRNA-binding protein 3"/>
    <property type="match status" value="1"/>
</dbReference>
<dbReference type="FunFam" id="3.30.1370.10:FF:000027">
    <property type="entry name" value="insulin-like growth factor 2 mRNA-binding protein 3 isoform X1"/>
    <property type="match status" value="1"/>
</dbReference>
<dbReference type="FunFam" id="3.30.70.330:FF:000099">
    <property type="entry name" value="insulin-like growth factor 2 mRNA-binding protein 3 isoform X1"/>
    <property type="match status" value="1"/>
</dbReference>
<dbReference type="Gene3D" id="3.30.310.210">
    <property type="match status" value="1"/>
</dbReference>
<dbReference type="Gene3D" id="3.30.70.330">
    <property type="match status" value="2"/>
</dbReference>
<dbReference type="Gene3D" id="3.30.1370.10">
    <property type="entry name" value="K Homology domain, type 1"/>
    <property type="match status" value="2"/>
</dbReference>
<dbReference type="InterPro" id="IPR004087">
    <property type="entry name" value="KH_dom"/>
</dbReference>
<dbReference type="InterPro" id="IPR004088">
    <property type="entry name" value="KH_dom_type_1"/>
</dbReference>
<dbReference type="InterPro" id="IPR036612">
    <property type="entry name" value="KH_dom_type_1_sf"/>
</dbReference>
<dbReference type="InterPro" id="IPR012677">
    <property type="entry name" value="Nucleotide-bd_a/b_plait_sf"/>
</dbReference>
<dbReference type="InterPro" id="IPR035979">
    <property type="entry name" value="RBD_domain_sf"/>
</dbReference>
<dbReference type="InterPro" id="IPR000504">
    <property type="entry name" value="RRM_dom"/>
</dbReference>
<dbReference type="PANTHER" id="PTHR10288">
    <property type="entry name" value="KH DOMAIN CONTAINING RNA BINDING PROTEIN"/>
    <property type="match status" value="1"/>
</dbReference>
<dbReference type="Pfam" id="PF00013">
    <property type="entry name" value="KH_1"/>
    <property type="match status" value="4"/>
</dbReference>
<dbReference type="Pfam" id="PF00076">
    <property type="entry name" value="RRM_1"/>
    <property type="match status" value="2"/>
</dbReference>
<dbReference type="SMART" id="SM00322">
    <property type="entry name" value="KH"/>
    <property type="match status" value="4"/>
</dbReference>
<dbReference type="SMART" id="SM00360">
    <property type="entry name" value="RRM"/>
    <property type="match status" value="2"/>
</dbReference>
<dbReference type="SUPFAM" id="SSF54791">
    <property type="entry name" value="Eukaryotic type KH-domain (KH-domain type I)"/>
    <property type="match status" value="4"/>
</dbReference>
<dbReference type="SUPFAM" id="SSF54928">
    <property type="entry name" value="RNA-binding domain, RBD"/>
    <property type="match status" value="1"/>
</dbReference>
<dbReference type="PROSITE" id="PS50084">
    <property type="entry name" value="KH_TYPE_1"/>
    <property type="match status" value="4"/>
</dbReference>
<dbReference type="PROSITE" id="PS50102">
    <property type="entry name" value="RRM"/>
    <property type="match status" value="2"/>
</dbReference>
<accession>O57526</accession>